<proteinExistence type="inferred from homology"/>
<comment type="function">
    <text evidence="1">This protein is involved in the repair of mismatches in DNA. It is possible that it carries out the mismatch recognition step. This protein has a weak ATPase activity.</text>
</comment>
<comment type="similarity">
    <text evidence="1">Belongs to the DNA mismatch repair MutS family.</text>
</comment>
<evidence type="ECO:0000255" key="1">
    <source>
        <dbReference type="HAMAP-Rule" id="MF_00096"/>
    </source>
</evidence>
<evidence type="ECO:0000256" key="2">
    <source>
        <dbReference type="SAM" id="MobiDB-lite"/>
    </source>
</evidence>
<gene>
    <name evidence="1" type="primary">mutS</name>
    <name type="ordered locus">Nwi_0490</name>
</gene>
<sequence>MMEQYLEIKAANPGLLLFYRMGDFYELFFEDAEIASRALGITLTKRGKHQGADIPMCGVPVERSDDYLHRLIAAGHRVAVCEQTEDPSAARKRGNKSVVRRDVVRLVTPGTLTEDTLLDARANNYLLALARARASSGVDRFALAWIDISTAEFMVTECGANELAATLARINPNEVIVSDTLHGDPDLGALLRELPSVTPLPRDTFDGATAERRLCDYFAVATMDGLSAMSRLEATAAAAAVTYIDRTQIGQRPPLSPPSREASGSTMAIDPATRANLELTRTLAGERRGSLLDAIDRTMTAAGSRLLAQRLAAPLTDTAAITRRLDAVAALTADGAARDDIRAILRTAPDMSRALARLSLGRGGPRDLAGLRDGVMAADQTLARLAGLSDPPEGIAAAMQALRGPSRELARELGNALSENLPLMKRDGGFVREGYDTALDEARKLRDDSRLVVAAMQARYAEETGVKTLKIRHNNVLGYFVEVTAQHANRLMSAPLNATFIHRQTLAGQVRFTTSELGEIEARIANAGERALGLELDIFDRLAAMAIRNGDEIRNAAHAFAQLDVAASFAKLAIDENYTRPDIDASLSFAIEGGRHPVVEQALKRTGQPFIANACDLSPPPPPVEGSGESGQIWLLTGPNMAGKSTFLRQNALIALMAQVGSFVPASRARIGIIDRLFSRVGAADDLARGRSTFMVEMVETAVILNQASERALVILDEIGRGTATFDGLSIAWATIEHLHESNRCRALFATHYHELTALSAKLPRLFNATVRVKEWHGEVVFLHEVLPGAADRSYGIQVARLAGLPPSVIARAKSVLAKLEAQDRGSTVRVLVDDLPLFAVTSRTGESAPTGETSPLIEALKSLHPDEMSPREALDALYALKAKLPKQ</sequence>
<name>MUTS_NITWN</name>
<reference key="1">
    <citation type="journal article" date="2006" name="Appl. Environ. Microbiol.">
        <title>Genome sequence of the chemolithoautotrophic nitrite-oxidizing bacterium Nitrobacter winogradskyi Nb-255.</title>
        <authorList>
            <person name="Starkenburg S.R."/>
            <person name="Chain P.S.G."/>
            <person name="Sayavedra-Soto L.A."/>
            <person name="Hauser L."/>
            <person name="Land M.L."/>
            <person name="Larimer F.W."/>
            <person name="Malfatti S.A."/>
            <person name="Klotz M.G."/>
            <person name="Bottomley P.J."/>
            <person name="Arp D.J."/>
            <person name="Hickey W.J."/>
        </authorList>
    </citation>
    <scope>NUCLEOTIDE SEQUENCE [LARGE SCALE GENOMIC DNA]</scope>
    <source>
        <strain>ATCC 25391 / DSM 10237 / CIP 104748 / NCIMB 11846 / Nb-255</strain>
    </source>
</reference>
<dbReference type="EMBL" id="CP000115">
    <property type="protein sequence ID" value="ABA03757.1"/>
    <property type="molecule type" value="Genomic_DNA"/>
</dbReference>
<dbReference type="SMR" id="Q3SVD4"/>
<dbReference type="STRING" id="323098.Nwi_0490"/>
<dbReference type="KEGG" id="nwi:Nwi_0490"/>
<dbReference type="eggNOG" id="COG0249">
    <property type="taxonomic scope" value="Bacteria"/>
</dbReference>
<dbReference type="HOGENOM" id="CLU_002472_4_0_5"/>
<dbReference type="Proteomes" id="UP000002531">
    <property type="component" value="Chromosome"/>
</dbReference>
<dbReference type="GO" id="GO:0005829">
    <property type="term" value="C:cytosol"/>
    <property type="evidence" value="ECO:0007669"/>
    <property type="project" value="TreeGrafter"/>
</dbReference>
<dbReference type="GO" id="GO:0005524">
    <property type="term" value="F:ATP binding"/>
    <property type="evidence" value="ECO:0007669"/>
    <property type="project" value="UniProtKB-UniRule"/>
</dbReference>
<dbReference type="GO" id="GO:0140664">
    <property type="term" value="F:ATP-dependent DNA damage sensor activity"/>
    <property type="evidence" value="ECO:0007669"/>
    <property type="project" value="InterPro"/>
</dbReference>
<dbReference type="GO" id="GO:0003684">
    <property type="term" value="F:damaged DNA binding"/>
    <property type="evidence" value="ECO:0007669"/>
    <property type="project" value="UniProtKB-UniRule"/>
</dbReference>
<dbReference type="GO" id="GO:0030983">
    <property type="term" value="F:mismatched DNA binding"/>
    <property type="evidence" value="ECO:0007669"/>
    <property type="project" value="InterPro"/>
</dbReference>
<dbReference type="GO" id="GO:0006298">
    <property type="term" value="P:mismatch repair"/>
    <property type="evidence" value="ECO:0007669"/>
    <property type="project" value="UniProtKB-UniRule"/>
</dbReference>
<dbReference type="CDD" id="cd03284">
    <property type="entry name" value="ABC_MutS1"/>
    <property type="match status" value="1"/>
</dbReference>
<dbReference type="FunFam" id="3.40.1170.10:FF:000001">
    <property type="entry name" value="DNA mismatch repair protein MutS"/>
    <property type="match status" value="1"/>
</dbReference>
<dbReference type="FunFam" id="3.40.50.300:FF:001579">
    <property type="entry name" value="DNA mismatch repair protein MutS"/>
    <property type="match status" value="1"/>
</dbReference>
<dbReference type="Gene3D" id="1.10.1420.10">
    <property type="match status" value="2"/>
</dbReference>
<dbReference type="Gene3D" id="6.10.140.430">
    <property type="match status" value="1"/>
</dbReference>
<dbReference type="Gene3D" id="3.40.1170.10">
    <property type="entry name" value="DNA repair protein MutS, domain I"/>
    <property type="match status" value="1"/>
</dbReference>
<dbReference type="Gene3D" id="3.30.420.110">
    <property type="entry name" value="MutS, connector domain"/>
    <property type="match status" value="1"/>
</dbReference>
<dbReference type="Gene3D" id="3.40.50.300">
    <property type="entry name" value="P-loop containing nucleotide triphosphate hydrolases"/>
    <property type="match status" value="1"/>
</dbReference>
<dbReference type="HAMAP" id="MF_00096">
    <property type="entry name" value="MutS"/>
    <property type="match status" value="1"/>
</dbReference>
<dbReference type="InterPro" id="IPR005748">
    <property type="entry name" value="DNA_mismatch_repair_MutS"/>
</dbReference>
<dbReference type="InterPro" id="IPR007695">
    <property type="entry name" value="DNA_mismatch_repair_MutS-lik_N"/>
</dbReference>
<dbReference type="InterPro" id="IPR017261">
    <property type="entry name" value="DNA_mismatch_repair_MutS/MSH"/>
</dbReference>
<dbReference type="InterPro" id="IPR000432">
    <property type="entry name" value="DNA_mismatch_repair_MutS_C"/>
</dbReference>
<dbReference type="InterPro" id="IPR007861">
    <property type="entry name" value="DNA_mismatch_repair_MutS_clamp"/>
</dbReference>
<dbReference type="InterPro" id="IPR007696">
    <property type="entry name" value="DNA_mismatch_repair_MutS_core"/>
</dbReference>
<dbReference type="InterPro" id="IPR016151">
    <property type="entry name" value="DNA_mismatch_repair_MutS_N"/>
</dbReference>
<dbReference type="InterPro" id="IPR036187">
    <property type="entry name" value="DNA_mismatch_repair_MutS_sf"/>
</dbReference>
<dbReference type="InterPro" id="IPR007860">
    <property type="entry name" value="DNA_mmatch_repair_MutS_con_dom"/>
</dbReference>
<dbReference type="InterPro" id="IPR045076">
    <property type="entry name" value="MutS"/>
</dbReference>
<dbReference type="InterPro" id="IPR036678">
    <property type="entry name" value="MutS_con_dom_sf"/>
</dbReference>
<dbReference type="InterPro" id="IPR027417">
    <property type="entry name" value="P-loop_NTPase"/>
</dbReference>
<dbReference type="NCBIfam" id="TIGR01070">
    <property type="entry name" value="mutS1"/>
    <property type="match status" value="1"/>
</dbReference>
<dbReference type="NCBIfam" id="NF003810">
    <property type="entry name" value="PRK05399.1"/>
    <property type="match status" value="1"/>
</dbReference>
<dbReference type="PANTHER" id="PTHR11361:SF34">
    <property type="entry name" value="DNA MISMATCH REPAIR PROTEIN MSH1, MITOCHONDRIAL"/>
    <property type="match status" value="1"/>
</dbReference>
<dbReference type="PANTHER" id="PTHR11361">
    <property type="entry name" value="DNA MISMATCH REPAIR PROTEIN MUTS FAMILY MEMBER"/>
    <property type="match status" value="1"/>
</dbReference>
<dbReference type="Pfam" id="PF01624">
    <property type="entry name" value="MutS_I"/>
    <property type="match status" value="1"/>
</dbReference>
<dbReference type="Pfam" id="PF05188">
    <property type="entry name" value="MutS_II"/>
    <property type="match status" value="1"/>
</dbReference>
<dbReference type="Pfam" id="PF05192">
    <property type="entry name" value="MutS_III"/>
    <property type="match status" value="1"/>
</dbReference>
<dbReference type="Pfam" id="PF05190">
    <property type="entry name" value="MutS_IV"/>
    <property type="match status" value="1"/>
</dbReference>
<dbReference type="Pfam" id="PF00488">
    <property type="entry name" value="MutS_V"/>
    <property type="match status" value="1"/>
</dbReference>
<dbReference type="PIRSF" id="PIRSF037677">
    <property type="entry name" value="DNA_mis_repair_Msh6"/>
    <property type="match status" value="1"/>
</dbReference>
<dbReference type="SMART" id="SM00534">
    <property type="entry name" value="MUTSac"/>
    <property type="match status" value="1"/>
</dbReference>
<dbReference type="SMART" id="SM00533">
    <property type="entry name" value="MUTSd"/>
    <property type="match status" value="1"/>
</dbReference>
<dbReference type="SUPFAM" id="SSF55271">
    <property type="entry name" value="DNA repair protein MutS, domain I"/>
    <property type="match status" value="1"/>
</dbReference>
<dbReference type="SUPFAM" id="SSF53150">
    <property type="entry name" value="DNA repair protein MutS, domain II"/>
    <property type="match status" value="1"/>
</dbReference>
<dbReference type="SUPFAM" id="SSF48334">
    <property type="entry name" value="DNA repair protein MutS, domain III"/>
    <property type="match status" value="1"/>
</dbReference>
<dbReference type="SUPFAM" id="SSF52540">
    <property type="entry name" value="P-loop containing nucleoside triphosphate hydrolases"/>
    <property type="match status" value="1"/>
</dbReference>
<dbReference type="PROSITE" id="PS00486">
    <property type="entry name" value="DNA_MISMATCH_REPAIR_2"/>
    <property type="match status" value="1"/>
</dbReference>
<protein>
    <recommendedName>
        <fullName evidence="1">DNA mismatch repair protein MutS</fullName>
    </recommendedName>
</protein>
<organism>
    <name type="scientific">Nitrobacter winogradskyi (strain ATCC 25391 / DSM 10237 / CIP 104748 / NCIMB 11846 / Nb-255)</name>
    <dbReference type="NCBI Taxonomy" id="323098"/>
    <lineage>
        <taxon>Bacteria</taxon>
        <taxon>Pseudomonadati</taxon>
        <taxon>Pseudomonadota</taxon>
        <taxon>Alphaproteobacteria</taxon>
        <taxon>Hyphomicrobiales</taxon>
        <taxon>Nitrobacteraceae</taxon>
        <taxon>Nitrobacter</taxon>
    </lineage>
</organism>
<feature type="chain" id="PRO_0000224385" description="DNA mismatch repair protein MutS">
    <location>
        <begin position="1"/>
        <end position="888"/>
    </location>
</feature>
<feature type="region of interest" description="Disordered" evidence="2">
    <location>
        <begin position="249"/>
        <end position="271"/>
    </location>
</feature>
<feature type="binding site" evidence="1">
    <location>
        <begin position="638"/>
        <end position="645"/>
    </location>
    <ligand>
        <name>ATP</name>
        <dbReference type="ChEBI" id="CHEBI:30616"/>
    </ligand>
</feature>
<accession>Q3SVD4</accession>
<keyword id="KW-0067">ATP-binding</keyword>
<keyword id="KW-0227">DNA damage</keyword>
<keyword id="KW-0234">DNA repair</keyword>
<keyword id="KW-0238">DNA-binding</keyword>
<keyword id="KW-0547">Nucleotide-binding</keyword>
<keyword id="KW-1185">Reference proteome</keyword>